<gene>
    <name type="primary">BBD1</name>
    <name type="ordered locus">Os01g0702000</name>
    <name type="ordered locus">LOC_Os01g50622</name>
    <name type="ORF">OsJ_03158</name>
    <name type="ORF">P0047E11.30</name>
    <name type="ORF">P0421H07.6</name>
</gene>
<comment type="function">
    <text evidence="2">Bifunctional nuclease with both RNase and DNase activities. Involved in basal defense response. Participates in abscisic acid-derived callose deposition following infection by a necrotrophic pathogen.</text>
</comment>
<comment type="subcellular location">
    <subcellularLocation>
        <location evidence="1">Nucleus</location>
    </subcellularLocation>
</comment>
<comment type="induction">
    <text evidence="2">Up-regulated by abscisic acid, etephon, salicylic acid and methyl jasmonate.</text>
</comment>
<comment type="similarity">
    <text evidence="3">Belongs to the bifunctional nuclease family.</text>
</comment>
<proteinExistence type="evidence at transcript level"/>
<keyword id="KW-0378">Hydrolase</keyword>
<keyword id="KW-0540">Nuclease</keyword>
<keyword id="KW-0539">Nucleus</keyword>
<keyword id="KW-1185">Reference proteome</keyword>
<sequence length="331" mass="37527">MEIINGPVLPRYAAPATGALTSDAKISGQLLRRVHLRRRACGLQGDHYRAARRFFGFPSERHARSGWVWPVCCSYGSSSDGDGAAAADYDASGEEFVNSSVMEAVELRSVSDGFVIKMRDGKNLRCVQNNPRVLRLRDSAPHHAIVLKMEDGSDLLLPIIVMETPSIMLLAALRNIRIPRPTIYNVVKEMTERMGYAVRLVRITEMVHDAYYSRLYLAKIGNEEETISLDLKPSDAINIAFRCKVPIQVNRRIAYNNGLKVVQPTPSESYVSSDQFQYTRLDRPDDQPCFEAQEFDLVRNMLVAAVEERYKDAAQYRDQLFMFRAKKKNMI</sequence>
<dbReference type="EC" id="3.1.-.-"/>
<dbReference type="EMBL" id="AP003245">
    <property type="protein sequence ID" value="BAD81783.1"/>
    <property type="molecule type" value="Genomic_DNA"/>
</dbReference>
<dbReference type="EMBL" id="AP003378">
    <property type="protein sequence ID" value="BAD82225.1"/>
    <property type="molecule type" value="Genomic_DNA"/>
</dbReference>
<dbReference type="EMBL" id="AP008207">
    <property type="protein sequence ID" value="BAF05906.1"/>
    <property type="molecule type" value="Genomic_DNA"/>
</dbReference>
<dbReference type="EMBL" id="AP014957">
    <property type="protein sequence ID" value="BAS73900.1"/>
    <property type="molecule type" value="Genomic_DNA"/>
</dbReference>
<dbReference type="EMBL" id="CM000138">
    <property type="protein sequence ID" value="EEE55256.1"/>
    <property type="molecule type" value="Genomic_DNA"/>
</dbReference>
<dbReference type="EMBL" id="AK065414">
    <property type="protein sequence ID" value="BAG89510.1"/>
    <property type="molecule type" value="mRNA"/>
</dbReference>
<dbReference type="RefSeq" id="XP_015621320.1">
    <property type="nucleotide sequence ID" value="XM_015765834.1"/>
</dbReference>
<dbReference type="RefSeq" id="XP_015621322.1">
    <property type="nucleotide sequence ID" value="XM_015765836.1"/>
</dbReference>
<dbReference type="RefSeq" id="XP_015621323.1">
    <property type="nucleotide sequence ID" value="XM_015765837.1"/>
</dbReference>
<dbReference type="RefSeq" id="XP_015621324.1">
    <property type="nucleotide sequence ID" value="XM_015765838.1"/>
</dbReference>
<dbReference type="SMR" id="Q5N8J3"/>
<dbReference type="STRING" id="39947.Q5N8J3"/>
<dbReference type="PaxDb" id="39947-Q5N8J3"/>
<dbReference type="EnsemblPlants" id="Os01t0702000-01">
    <property type="protein sequence ID" value="Os01t0702000-01"/>
    <property type="gene ID" value="Os01g0702000"/>
</dbReference>
<dbReference type="GeneID" id="4326932"/>
<dbReference type="Gramene" id="Os01t0702000-01">
    <property type="protein sequence ID" value="Os01t0702000-01"/>
    <property type="gene ID" value="Os01g0702000"/>
</dbReference>
<dbReference type="KEGG" id="dosa:Os01g0702000"/>
<dbReference type="KEGG" id="osa:4326932"/>
<dbReference type="eggNOG" id="ENOG502QQ9S">
    <property type="taxonomic scope" value="Eukaryota"/>
</dbReference>
<dbReference type="HOGENOM" id="CLU_050306_1_0_1"/>
<dbReference type="InParanoid" id="Q5N8J3"/>
<dbReference type="OMA" id="MRRMACG"/>
<dbReference type="OrthoDB" id="566255at2759"/>
<dbReference type="Proteomes" id="UP000000763">
    <property type="component" value="Chromosome 1"/>
</dbReference>
<dbReference type="Proteomes" id="UP000007752">
    <property type="component" value="Chromosome 1"/>
</dbReference>
<dbReference type="Proteomes" id="UP000059680">
    <property type="component" value="Chromosome 1"/>
</dbReference>
<dbReference type="GO" id="GO:0005634">
    <property type="term" value="C:nucleus"/>
    <property type="evidence" value="ECO:0000318"/>
    <property type="project" value="GO_Central"/>
</dbReference>
<dbReference type="GO" id="GO:0030891">
    <property type="term" value="C:VCB complex"/>
    <property type="evidence" value="ECO:0000318"/>
    <property type="project" value="GO_Central"/>
</dbReference>
<dbReference type="GO" id="GO:0004518">
    <property type="term" value="F:nuclease activity"/>
    <property type="evidence" value="ECO:0007669"/>
    <property type="project" value="UniProtKB-KW"/>
</dbReference>
<dbReference type="GO" id="GO:0016567">
    <property type="term" value="P:protein ubiquitination"/>
    <property type="evidence" value="ECO:0000318"/>
    <property type="project" value="GO_Central"/>
</dbReference>
<dbReference type="Gene3D" id="3.10.690.10">
    <property type="entry name" value="Bifunctional nuclease domain"/>
    <property type="match status" value="1"/>
</dbReference>
<dbReference type="InterPro" id="IPR036104">
    <property type="entry name" value="BFN_sf"/>
</dbReference>
<dbReference type="InterPro" id="IPR003729">
    <property type="entry name" value="Bi_nuclease_dom"/>
</dbReference>
<dbReference type="PANTHER" id="PTHR15160:SF13">
    <property type="entry name" value="BIFUNCTIONAL NUCLEASE 1"/>
    <property type="match status" value="1"/>
</dbReference>
<dbReference type="PANTHER" id="PTHR15160">
    <property type="entry name" value="VON HIPPEL-LINDAU PROTEIN"/>
    <property type="match status" value="1"/>
</dbReference>
<dbReference type="Pfam" id="PF02577">
    <property type="entry name" value="BFN_dom"/>
    <property type="match status" value="1"/>
</dbReference>
<dbReference type="SUPFAM" id="SSF103256">
    <property type="entry name" value="Hypothetical protein TM0160"/>
    <property type="match status" value="1"/>
</dbReference>
<dbReference type="PROSITE" id="PS51658">
    <property type="entry name" value="BFN"/>
    <property type="match status" value="1"/>
</dbReference>
<feature type="chain" id="PRO_0000419550" description="Bifunctional nuclease 1">
    <location>
        <begin position="1"/>
        <end position="331"/>
    </location>
</feature>
<feature type="domain" description="BFN">
    <location>
        <begin position="126"/>
        <end position="261"/>
    </location>
</feature>
<feature type="domain" description="UVR">
    <location>
        <begin position="291"/>
        <end position="326"/>
    </location>
</feature>
<reference key="1">
    <citation type="journal article" date="2002" name="Nature">
        <title>The genome sequence and structure of rice chromosome 1.</title>
        <authorList>
            <person name="Sasaki T."/>
            <person name="Matsumoto T."/>
            <person name="Yamamoto K."/>
            <person name="Sakata K."/>
            <person name="Baba T."/>
            <person name="Katayose Y."/>
            <person name="Wu J."/>
            <person name="Niimura Y."/>
            <person name="Cheng Z."/>
            <person name="Nagamura Y."/>
            <person name="Antonio B.A."/>
            <person name="Kanamori H."/>
            <person name="Hosokawa S."/>
            <person name="Masukawa M."/>
            <person name="Arikawa K."/>
            <person name="Chiden Y."/>
            <person name="Hayashi M."/>
            <person name="Okamoto M."/>
            <person name="Ando T."/>
            <person name="Aoki H."/>
            <person name="Arita K."/>
            <person name="Hamada M."/>
            <person name="Harada C."/>
            <person name="Hijishita S."/>
            <person name="Honda M."/>
            <person name="Ichikawa Y."/>
            <person name="Idonuma A."/>
            <person name="Iijima M."/>
            <person name="Ikeda M."/>
            <person name="Ikeno M."/>
            <person name="Ito S."/>
            <person name="Ito T."/>
            <person name="Ito Y."/>
            <person name="Ito Y."/>
            <person name="Iwabuchi A."/>
            <person name="Kamiya K."/>
            <person name="Karasawa W."/>
            <person name="Katagiri S."/>
            <person name="Kikuta A."/>
            <person name="Kobayashi N."/>
            <person name="Kono I."/>
            <person name="Machita K."/>
            <person name="Maehara T."/>
            <person name="Mizuno H."/>
            <person name="Mizubayashi T."/>
            <person name="Mukai Y."/>
            <person name="Nagasaki H."/>
            <person name="Nakashima M."/>
            <person name="Nakama Y."/>
            <person name="Nakamichi Y."/>
            <person name="Nakamura M."/>
            <person name="Namiki N."/>
            <person name="Negishi M."/>
            <person name="Ohta I."/>
            <person name="Ono N."/>
            <person name="Saji S."/>
            <person name="Sakai K."/>
            <person name="Shibata M."/>
            <person name="Shimokawa T."/>
            <person name="Shomura A."/>
            <person name="Song J."/>
            <person name="Takazaki Y."/>
            <person name="Terasawa K."/>
            <person name="Tsuji K."/>
            <person name="Waki K."/>
            <person name="Yamagata H."/>
            <person name="Yamane H."/>
            <person name="Yoshiki S."/>
            <person name="Yoshihara R."/>
            <person name="Yukawa K."/>
            <person name="Zhong H."/>
            <person name="Iwama H."/>
            <person name="Endo T."/>
            <person name="Ito H."/>
            <person name="Hahn J.H."/>
            <person name="Kim H.-I."/>
            <person name="Eun M.-Y."/>
            <person name="Yano M."/>
            <person name="Jiang J."/>
            <person name="Gojobori T."/>
        </authorList>
    </citation>
    <scope>NUCLEOTIDE SEQUENCE [LARGE SCALE GENOMIC DNA]</scope>
    <source>
        <strain>cv. Nipponbare</strain>
    </source>
</reference>
<reference key="2">
    <citation type="journal article" date="2005" name="Nature">
        <title>The map-based sequence of the rice genome.</title>
        <authorList>
            <consortium name="International rice genome sequencing project (IRGSP)"/>
        </authorList>
    </citation>
    <scope>NUCLEOTIDE SEQUENCE [LARGE SCALE GENOMIC DNA]</scope>
    <source>
        <strain>cv. Nipponbare</strain>
    </source>
</reference>
<reference key="3">
    <citation type="journal article" date="2008" name="Nucleic Acids Res.">
        <title>The rice annotation project database (RAP-DB): 2008 update.</title>
        <authorList>
            <consortium name="The rice annotation project (RAP)"/>
        </authorList>
    </citation>
    <scope>GENOME REANNOTATION</scope>
    <source>
        <strain>cv. Nipponbare</strain>
    </source>
</reference>
<reference key="4">
    <citation type="journal article" date="2013" name="Rice">
        <title>Improvement of the Oryza sativa Nipponbare reference genome using next generation sequence and optical map data.</title>
        <authorList>
            <person name="Kawahara Y."/>
            <person name="de la Bastide M."/>
            <person name="Hamilton J.P."/>
            <person name="Kanamori H."/>
            <person name="McCombie W.R."/>
            <person name="Ouyang S."/>
            <person name="Schwartz D.C."/>
            <person name="Tanaka T."/>
            <person name="Wu J."/>
            <person name="Zhou S."/>
            <person name="Childs K.L."/>
            <person name="Davidson R.M."/>
            <person name="Lin H."/>
            <person name="Quesada-Ocampo L."/>
            <person name="Vaillancourt B."/>
            <person name="Sakai H."/>
            <person name="Lee S.S."/>
            <person name="Kim J."/>
            <person name="Numa H."/>
            <person name="Itoh T."/>
            <person name="Buell C.R."/>
            <person name="Matsumoto T."/>
        </authorList>
    </citation>
    <scope>GENOME REANNOTATION</scope>
    <source>
        <strain>cv. Nipponbare</strain>
    </source>
</reference>
<reference key="5">
    <citation type="journal article" date="2005" name="PLoS Biol.">
        <title>The genomes of Oryza sativa: a history of duplications.</title>
        <authorList>
            <person name="Yu J."/>
            <person name="Wang J."/>
            <person name="Lin W."/>
            <person name="Li S."/>
            <person name="Li H."/>
            <person name="Zhou J."/>
            <person name="Ni P."/>
            <person name="Dong W."/>
            <person name="Hu S."/>
            <person name="Zeng C."/>
            <person name="Zhang J."/>
            <person name="Zhang Y."/>
            <person name="Li R."/>
            <person name="Xu Z."/>
            <person name="Li S."/>
            <person name="Li X."/>
            <person name="Zheng H."/>
            <person name="Cong L."/>
            <person name="Lin L."/>
            <person name="Yin J."/>
            <person name="Geng J."/>
            <person name="Li G."/>
            <person name="Shi J."/>
            <person name="Liu J."/>
            <person name="Lv H."/>
            <person name="Li J."/>
            <person name="Wang J."/>
            <person name="Deng Y."/>
            <person name="Ran L."/>
            <person name="Shi X."/>
            <person name="Wang X."/>
            <person name="Wu Q."/>
            <person name="Li C."/>
            <person name="Ren X."/>
            <person name="Wang J."/>
            <person name="Wang X."/>
            <person name="Li D."/>
            <person name="Liu D."/>
            <person name="Zhang X."/>
            <person name="Ji Z."/>
            <person name="Zhao W."/>
            <person name="Sun Y."/>
            <person name="Zhang Z."/>
            <person name="Bao J."/>
            <person name="Han Y."/>
            <person name="Dong L."/>
            <person name="Ji J."/>
            <person name="Chen P."/>
            <person name="Wu S."/>
            <person name="Liu J."/>
            <person name="Xiao Y."/>
            <person name="Bu D."/>
            <person name="Tan J."/>
            <person name="Yang L."/>
            <person name="Ye C."/>
            <person name="Zhang J."/>
            <person name="Xu J."/>
            <person name="Zhou Y."/>
            <person name="Yu Y."/>
            <person name="Zhang B."/>
            <person name="Zhuang S."/>
            <person name="Wei H."/>
            <person name="Liu B."/>
            <person name="Lei M."/>
            <person name="Yu H."/>
            <person name="Li Y."/>
            <person name="Xu H."/>
            <person name="Wei S."/>
            <person name="He X."/>
            <person name="Fang L."/>
            <person name="Zhang Z."/>
            <person name="Zhang Y."/>
            <person name="Huang X."/>
            <person name="Su Z."/>
            <person name="Tong W."/>
            <person name="Li J."/>
            <person name="Tong Z."/>
            <person name="Li S."/>
            <person name="Ye J."/>
            <person name="Wang L."/>
            <person name="Fang L."/>
            <person name="Lei T."/>
            <person name="Chen C.-S."/>
            <person name="Chen H.-C."/>
            <person name="Xu Z."/>
            <person name="Li H."/>
            <person name="Huang H."/>
            <person name="Zhang F."/>
            <person name="Xu H."/>
            <person name="Li N."/>
            <person name="Zhao C."/>
            <person name="Li S."/>
            <person name="Dong L."/>
            <person name="Huang Y."/>
            <person name="Li L."/>
            <person name="Xi Y."/>
            <person name="Qi Q."/>
            <person name="Li W."/>
            <person name="Zhang B."/>
            <person name="Hu W."/>
            <person name="Zhang Y."/>
            <person name="Tian X."/>
            <person name="Jiao Y."/>
            <person name="Liang X."/>
            <person name="Jin J."/>
            <person name="Gao L."/>
            <person name="Zheng W."/>
            <person name="Hao B."/>
            <person name="Liu S.-M."/>
            <person name="Wang W."/>
            <person name="Yuan L."/>
            <person name="Cao M."/>
            <person name="McDermott J."/>
            <person name="Samudrala R."/>
            <person name="Wang J."/>
            <person name="Wong G.K.-S."/>
            <person name="Yang H."/>
        </authorList>
    </citation>
    <scope>NUCLEOTIDE SEQUENCE [LARGE SCALE GENOMIC DNA]</scope>
    <source>
        <strain>cv. Nipponbare</strain>
    </source>
</reference>
<reference key="6">
    <citation type="journal article" date="2003" name="Science">
        <title>Collection, mapping, and annotation of over 28,000 cDNA clones from japonica rice.</title>
        <authorList>
            <consortium name="The rice full-length cDNA consortium"/>
        </authorList>
    </citation>
    <scope>NUCLEOTIDE SEQUENCE [LARGE SCALE MRNA]</scope>
    <source>
        <strain>cv. Nipponbare</strain>
    </source>
</reference>
<reference key="7">
    <citation type="journal article" date="2010" name="Plant Physiol.">
        <title>Novel bifunctional nucleases, OmBBD and AtBBD1, are involved in abscisic acid-mediated callose deposition in Arabidopsis.</title>
        <authorList>
            <person name="You M.K."/>
            <person name="Shin H.Y."/>
            <person name="Kim Y.J."/>
            <person name="Ok S.H."/>
            <person name="Cho S.K."/>
            <person name="Jeung J.U."/>
            <person name="Yoo S.D."/>
            <person name="Kim J.K."/>
            <person name="Shin J.S."/>
        </authorList>
    </citation>
    <scope>FUNCTION</scope>
    <scope>INDUCTION</scope>
</reference>
<accession>Q5N8J3</accession>
<accession>A0A0P0V721</accession>
<name>BBD1_ORYSJ</name>
<evidence type="ECO:0000250" key="1"/>
<evidence type="ECO:0000269" key="2">
    <source>
    </source>
</evidence>
<evidence type="ECO:0000305" key="3"/>
<organism>
    <name type="scientific">Oryza sativa subsp. japonica</name>
    <name type="common">Rice</name>
    <dbReference type="NCBI Taxonomy" id="39947"/>
    <lineage>
        <taxon>Eukaryota</taxon>
        <taxon>Viridiplantae</taxon>
        <taxon>Streptophyta</taxon>
        <taxon>Embryophyta</taxon>
        <taxon>Tracheophyta</taxon>
        <taxon>Spermatophyta</taxon>
        <taxon>Magnoliopsida</taxon>
        <taxon>Liliopsida</taxon>
        <taxon>Poales</taxon>
        <taxon>Poaceae</taxon>
        <taxon>BOP clade</taxon>
        <taxon>Oryzoideae</taxon>
        <taxon>Oryzeae</taxon>
        <taxon>Oryzinae</taxon>
        <taxon>Oryza</taxon>
        <taxon>Oryza sativa</taxon>
    </lineage>
</organism>
<protein>
    <recommendedName>
        <fullName>Bifunctional nuclease 1</fullName>
        <shortName>OsBBD1</shortName>
        <ecNumber>3.1.-.-</ecNumber>
    </recommendedName>
</protein>